<gene>
    <name evidence="1" type="primary">tsaD</name>
    <name type="synonym">gcp</name>
    <name type="ordered locus">Sbal223_3165</name>
</gene>
<organism>
    <name type="scientific">Shewanella baltica (strain OS223)</name>
    <dbReference type="NCBI Taxonomy" id="407976"/>
    <lineage>
        <taxon>Bacteria</taxon>
        <taxon>Pseudomonadati</taxon>
        <taxon>Pseudomonadota</taxon>
        <taxon>Gammaproteobacteria</taxon>
        <taxon>Alteromonadales</taxon>
        <taxon>Shewanellaceae</taxon>
        <taxon>Shewanella</taxon>
    </lineage>
</organism>
<keyword id="KW-0012">Acyltransferase</keyword>
<keyword id="KW-0963">Cytoplasm</keyword>
<keyword id="KW-0408">Iron</keyword>
<keyword id="KW-0479">Metal-binding</keyword>
<keyword id="KW-0808">Transferase</keyword>
<keyword id="KW-0819">tRNA processing</keyword>
<proteinExistence type="inferred from homology"/>
<accession>B8EBV5</accession>
<feature type="chain" id="PRO_1000184979" description="tRNA N6-adenosine threonylcarbamoyltransferase">
    <location>
        <begin position="1"/>
        <end position="338"/>
    </location>
</feature>
<feature type="binding site" evidence="1">
    <location>
        <position position="111"/>
    </location>
    <ligand>
        <name>Fe cation</name>
        <dbReference type="ChEBI" id="CHEBI:24875"/>
    </ligand>
</feature>
<feature type="binding site" evidence="1">
    <location>
        <position position="115"/>
    </location>
    <ligand>
        <name>Fe cation</name>
        <dbReference type="ChEBI" id="CHEBI:24875"/>
    </ligand>
</feature>
<feature type="binding site" evidence="1">
    <location>
        <begin position="134"/>
        <end position="138"/>
    </location>
    <ligand>
        <name>substrate</name>
    </ligand>
</feature>
<feature type="binding site" evidence="1">
    <location>
        <position position="167"/>
    </location>
    <ligand>
        <name>substrate</name>
    </ligand>
</feature>
<feature type="binding site" evidence="1">
    <location>
        <position position="180"/>
    </location>
    <ligand>
        <name>substrate</name>
    </ligand>
</feature>
<feature type="binding site" evidence="1">
    <location>
        <position position="272"/>
    </location>
    <ligand>
        <name>substrate</name>
    </ligand>
</feature>
<feature type="binding site" evidence="1">
    <location>
        <position position="300"/>
    </location>
    <ligand>
        <name>Fe cation</name>
        <dbReference type="ChEBI" id="CHEBI:24875"/>
    </ligand>
</feature>
<reference key="1">
    <citation type="submission" date="2008-12" db="EMBL/GenBank/DDBJ databases">
        <title>Complete sequence of chromosome of Shewanella baltica OS223.</title>
        <authorList>
            <consortium name="US DOE Joint Genome Institute"/>
            <person name="Lucas S."/>
            <person name="Copeland A."/>
            <person name="Lapidus A."/>
            <person name="Glavina del Rio T."/>
            <person name="Dalin E."/>
            <person name="Tice H."/>
            <person name="Bruce D."/>
            <person name="Goodwin L."/>
            <person name="Pitluck S."/>
            <person name="Chertkov O."/>
            <person name="Meincke L."/>
            <person name="Brettin T."/>
            <person name="Detter J.C."/>
            <person name="Han C."/>
            <person name="Kuske C.R."/>
            <person name="Larimer F."/>
            <person name="Land M."/>
            <person name="Hauser L."/>
            <person name="Kyrpides N."/>
            <person name="Ovchinnikova G."/>
            <person name="Brettar I."/>
            <person name="Rodrigues J."/>
            <person name="Konstantinidis K."/>
            <person name="Tiedje J."/>
        </authorList>
    </citation>
    <scope>NUCLEOTIDE SEQUENCE [LARGE SCALE GENOMIC DNA]</scope>
    <source>
        <strain>OS223</strain>
    </source>
</reference>
<comment type="function">
    <text evidence="1">Required for the formation of a threonylcarbamoyl group on adenosine at position 37 (t(6)A37) in tRNAs that read codons beginning with adenine. Is involved in the transfer of the threonylcarbamoyl moiety of threonylcarbamoyl-AMP (TC-AMP) to the N6 group of A37, together with TsaE and TsaB. TsaD likely plays a direct catalytic role in this reaction.</text>
</comment>
<comment type="catalytic activity">
    <reaction evidence="1">
        <text>L-threonylcarbamoyladenylate + adenosine(37) in tRNA = N(6)-L-threonylcarbamoyladenosine(37) in tRNA + AMP + H(+)</text>
        <dbReference type="Rhea" id="RHEA:37059"/>
        <dbReference type="Rhea" id="RHEA-COMP:10162"/>
        <dbReference type="Rhea" id="RHEA-COMP:10163"/>
        <dbReference type="ChEBI" id="CHEBI:15378"/>
        <dbReference type="ChEBI" id="CHEBI:73682"/>
        <dbReference type="ChEBI" id="CHEBI:74411"/>
        <dbReference type="ChEBI" id="CHEBI:74418"/>
        <dbReference type="ChEBI" id="CHEBI:456215"/>
        <dbReference type="EC" id="2.3.1.234"/>
    </reaction>
</comment>
<comment type="cofactor">
    <cofactor evidence="1">
        <name>Fe(2+)</name>
        <dbReference type="ChEBI" id="CHEBI:29033"/>
    </cofactor>
    <text evidence="1">Binds 1 Fe(2+) ion per subunit.</text>
</comment>
<comment type="subcellular location">
    <subcellularLocation>
        <location evidence="1">Cytoplasm</location>
    </subcellularLocation>
</comment>
<comment type="similarity">
    <text evidence="1">Belongs to the KAE1 / TsaD family.</text>
</comment>
<name>TSAD_SHEB2</name>
<dbReference type="EC" id="2.3.1.234" evidence="1"/>
<dbReference type="EMBL" id="CP001252">
    <property type="protein sequence ID" value="ACK47650.1"/>
    <property type="molecule type" value="Genomic_DNA"/>
</dbReference>
<dbReference type="RefSeq" id="WP_006085036.1">
    <property type="nucleotide sequence ID" value="NC_011663.1"/>
</dbReference>
<dbReference type="SMR" id="B8EBV5"/>
<dbReference type="GeneID" id="11771501"/>
<dbReference type="KEGG" id="sbp:Sbal223_3165"/>
<dbReference type="HOGENOM" id="CLU_023208_0_2_6"/>
<dbReference type="Proteomes" id="UP000002507">
    <property type="component" value="Chromosome"/>
</dbReference>
<dbReference type="GO" id="GO:0005737">
    <property type="term" value="C:cytoplasm"/>
    <property type="evidence" value="ECO:0007669"/>
    <property type="project" value="UniProtKB-SubCell"/>
</dbReference>
<dbReference type="GO" id="GO:0005506">
    <property type="term" value="F:iron ion binding"/>
    <property type="evidence" value="ECO:0007669"/>
    <property type="project" value="UniProtKB-UniRule"/>
</dbReference>
<dbReference type="GO" id="GO:0061711">
    <property type="term" value="F:N(6)-L-threonylcarbamoyladenine synthase activity"/>
    <property type="evidence" value="ECO:0007669"/>
    <property type="project" value="UniProtKB-EC"/>
</dbReference>
<dbReference type="GO" id="GO:0002949">
    <property type="term" value="P:tRNA threonylcarbamoyladenosine modification"/>
    <property type="evidence" value="ECO:0007669"/>
    <property type="project" value="UniProtKB-UniRule"/>
</dbReference>
<dbReference type="CDD" id="cd24133">
    <property type="entry name" value="ASKHA_NBD_TsaD_bac"/>
    <property type="match status" value="1"/>
</dbReference>
<dbReference type="FunFam" id="3.30.420.40:FF:000031">
    <property type="entry name" value="tRNA N6-adenosine threonylcarbamoyltransferase"/>
    <property type="match status" value="1"/>
</dbReference>
<dbReference type="Gene3D" id="3.30.420.40">
    <property type="match status" value="2"/>
</dbReference>
<dbReference type="HAMAP" id="MF_01445">
    <property type="entry name" value="TsaD"/>
    <property type="match status" value="1"/>
</dbReference>
<dbReference type="InterPro" id="IPR043129">
    <property type="entry name" value="ATPase_NBD"/>
</dbReference>
<dbReference type="InterPro" id="IPR000905">
    <property type="entry name" value="Gcp-like_dom"/>
</dbReference>
<dbReference type="InterPro" id="IPR017861">
    <property type="entry name" value="KAE1/TsaD"/>
</dbReference>
<dbReference type="InterPro" id="IPR017860">
    <property type="entry name" value="Peptidase_M22_CS"/>
</dbReference>
<dbReference type="InterPro" id="IPR022450">
    <property type="entry name" value="TsaD"/>
</dbReference>
<dbReference type="NCBIfam" id="TIGR00329">
    <property type="entry name" value="gcp_kae1"/>
    <property type="match status" value="1"/>
</dbReference>
<dbReference type="NCBIfam" id="TIGR03723">
    <property type="entry name" value="T6A_TsaD_YgjD"/>
    <property type="match status" value="1"/>
</dbReference>
<dbReference type="PANTHER" id="PTHR11735">
    <property type="entry name" value="TRNA N6-ADENOSINE THREONYLCARBAMOYLTRANSFERASE"/>
    <property type="match status" value="1"/>
</dbReference>
<dbReference type="PANTHER" id="PTHR11735:SF6">
    <property type="entry name" value="TRNA N6-ADENOSINE THREONYLCARBAMOYLTRANSFERASE, MITOCHONDRIAL"/>
    <property type="match status" value="1"/>
</dbReference>
<dbReference type="Pfam" id="PF00814">
    <property type="entry name" value="TsaD"/>
    <property type="match status" value="1"/>
</dbReference>
<dbReference type="PRINTS" id="PR00789">
    <property type="entry name" value="OSIALOPTASE"/>
</dbReference>
<dbReference type="SUPFAM" id="SSF53067">
    <property type="entry name" value="Actin-like ATPase domain"/>
    <property type="match status" value="2"/>
</dbReference>
<dbReference type="PROSITE" id="PS01016">
    <property type="entry name" value="GLYCOPROTEASE"/>
    <property type="match status" value="1"/>
</dbReference>
<sequence length="338" mass="36246">MRVLGIETSCDETGIAVYDDELGLLSHTLYSQVKLHADYGGVVPELASRDHVRKIVPLIRQALKDANTEMADLDGIAYTKGPGLIGALLVGACVGRSLAFAWDKPAIGVHHMEGHLLAPMLEDDAPEFPFVALLVSGGHSMLVKVDGIGRYEVLGESVDDAAGEAFDKTAKLMGLDYPGGPRLAKLAAKGLPAGYKFPRPMTDRPGLDFSFSGLKTFTANTIAAEPDDEQTRANIARAFEEAVVDTLAIKCRRALKQTGYNRLVIAGGVSANTRLRETLAEMMNSLGGQVFYPRGEFCTDNGAMIAFAGLQRLKAGQHEDLAVKGQPRWPLDTLPPVA</sequence>
<evidence type="ECO:0000255" key="1">
    <source>
        <dbReference type="HAMAP-Rule" id="MF_01445"/>
    </source>
</evidence>
<protein>
    <recommendedName>
        <fullName evidence="1">tRNA N6-adenosine threonylcarbamoyltransferase</fullName>
        <ecNumber evidence="1">2.3.1.234</ecNumber>
    </recommendedName>
    <alternativeName>
        <fullName evidence="1">N6-L-threonylcarbamoyladenine synthase</fullName>
        <shortName evidence="1">t(6)A synthase</shortName>
    </alternativeName>
    <alternativeName>
        <fullName evidence="1">t(6)A37 threonylcarbamoyladenosine biosynthesis protein TsaD</fullName>
    </alternativeName>
    <alternativeName>
        <fullName evidence="1">tRNA threonylcarbamoyladenosine biosynthesis protein TsaD</fullName>
    </alternativeName>
</protein>